<reference key="1">
    <citation type="journal article" date="2000" name="Nucleic Acids Res.">
        <title>Complete genome sequence of the alkaliphilic bacterium Bacillus halodurans and genomic sequence comparison with Bacillus subtilis.</title>
        <authorList>
            <person name="Takami H."/>
            <person name="Nakasone K."/>
            <person name="Takaki Y."/>
            <person name="Maeno G."/>
            <person name="Sasaki R."/>
            <person name="Masui N."/>
            <person name="Fuji F."/>
            <person name="Hirama C."/>
            <person name="Nakamura Y."/>
            <person name="Ogasawara N."/>
            <person name="Kuhara S."/>
            <person name="Horikoshi K."/>
        </authorList>
    </citation>
    <scope>NUCLEOTIDE SEQUENCE [LARGE SCALE GENOMIC DNA]</scope>
    <source>
        <strain>ATCC BAA-125 / DSM 18197 / FERM 7344 / JCM 9153 / C-125</strain>
    </source>
</reference>
<reference key="2">
    <citation type="journal article" date="1999" name="Extremophiles">
        <title>Genetic analysis of the chromosome of alkaliphilic Bacillus halodurans C-125.</title>
        <authorList>
            <person name="Takami H."/>
            <person name="Takaki Y."/>
            <person name="Nakasone K."/>
            <person name="Sakiyama T."/>
            <person name="Maeno G."/>
            <person name="Sasaki R."/>
            <person name="Hirama C."/>
            <person name="Fuji F."/>
            <person name="Masui N."/>
        </authorList>
    </citation>
    <scope>NUCLEOTIDE SEQUENCE [GENOMIC DNA] OF 95-330</scope>
    <source>
        <strain>ATCC BAA-125 / DSM 18197 / FERM 7344 / JCM 9153 / C-125</strain>
    </source>
</reference>
<organism>
    <name type="scientific">Halalkalibacterium halodurans (strain ATCC BAA-125 / DSM 18197 / FERM 7344 / JCM 9153 / C-125)</name>
    <name type="common">Bacillus halodurans</name>
    <dbReference type="NCBI Taxonomy" id="272558"/>
    <lineage>
        <taxon>Bacteria</taxon>
        <taxon>Bacillati</taxon>
        <taxon>Bacillota</taxon>
        <taxon>Bacilli</taxon>
        <taxon>Bacillales</taxon>
        <taxon>Bacillaceae</taxon>
        <taxon>Halalkalibacterium (ex Joshi et al. 2022)</taxon>
    </lineage>
</organism>
<dbReference type="EMBL" id="BA000004">
    <property type="protein sequence ID" value="BAB05350.1"/>
    <property type="molecule type" value="Genomic_DNA"/>
</dbReference>
<dbReference type="EMBL" id="AB024552">
    <property type="protein sequence ID" value="BAA83916.1"/>
    <property type="status" value="ALT_INIT"/>
    <property type="molecule type" value="Genomic_DNA"/>
</dbReference>
<dbReference type="PIR" id="G83853">
    <property type="entry name" value="G83853"/>
</dbReference>
<dbReference type="RefSeq" id="WP_010897794.1">
    <property type="nucleotide sequence ID" value="NC_002570.2"/>
</dbReference>
<dbReference type="SMR" id="Q9KCE0"/>
<dbReference type="STRING" id="272558.gene:10727529"/>
<dbReference type="KEGG" id="bha:BH1631"/>
<dbReference type="eggNOG" id="COG3409">
    <property type="taxonomic scope" value="Bacteria"/>
</dbReference>
<dbReference type="eggNOG" id="COG3773">
    <property type="taxonomic scope" value="Bacteria"/>
</dbReference>
<dbReference type="HOGENOM" id="CLU_053345_0_0_9"/>
<dbReference type="OrthoDB" id="9785345at2"/>
<dbReference type="Proteomes" id="UP000001258">
    <property type="component" value="Chromosome"/>
</dbReference>
<dbReference type="GO" id="GO:0016787">
    <property type="term" value="F:hydrolase activity"/>
    <property type="evidence" value="ECO:0007669"/>
    <property type="project" value="UniProtKB-KW"/>
</dbReference>
<dbReference type="GO" id="GO:0071555">
    <property type="term" value="P:cell wall organization"/>
    <property type="evidence" value="ECO:0007669"/>
    <property type="project" value="UniProtKB-KW"/>
</dbReference>
<dbReference type="GO" id="GO:0009847">
    <property type="term" value="P:spore germination"/>
    <property type="evidence" value="ECO:0007669"/>
    <property type="project" value="InterPro"/>
</dbReference>
<dbReference type="GO" id="GO:0030435">
    <property type="term" value="P:sporulation resulting in formation of a cellular spore"/>
    <property type="evidence" value="ECO:0007669"/>
    <property type="project" value="UniProtKB-KW"/>
</dbReference>
<dbReference type="FunFam" id="1.10.10.2520:FF:000001">
    <property type="entry name" value="Spore cortex-lytic enzyme"/>
    <property type="match status" value="1"/>
</dbReference>
<dbReference type="FunFam" id="6.20.240.60:FF:000001">
    <property type="entry name" value="Spore cortex-lytic enzyme"/>
    <property type="match status" value="1"/>
</dbReference>
<dbReference type="Gene3D" id="6.20.240.60">
    <property type="match status" value="1"/>
</dbReference>
<dbReference type="Gene3D" id="1.10.10.2520">
    <property type="entry name" value="Cell wall hydrolase SleB, domain 1"/>
    <property type="match status" value="1"/>
</dbReference>
<dbReference type="Gene3D" id="1.10.101.10">
    <property type="entry name" value="PGBD-like superfamily/PGBD"/>
    <property type="match status" value="1"/>
</dbReference>
<dbReference type="InterPro" id="IPR011105">
    <property type="entry name" value="Cell_wall_hydrolase_SleB"/>
</dbReference>
<dbReference type="InterPro" id="IPR002477">
    <property type="entry name" value="Peptidoglycan-bd-like"/>
</dbReference>
<dbReference type="InterPro" id="IPR036365">
    <property type="entry name" value="PGBD-like_sf"/>
</dbReference>
<dbReference type="InterPro" id="IPR036366">
    <property type="entry name" value="PGBDSf"/>
</dbReference>
<dbReference type="InterPro" id="IPR042047">
    <property type="entry name" value="SleB_dom1"/>
</dbReference>
<dbReference type="InterPro" id="IPR014224">
    <property type="entry name" value="Spore_cortex_SleB"/>
</dbReference>
<dbReference type="NCBIfam" id="TIGR02869">
    <property type="entry name" value="spore_SleB"/>
    <property type="match status" value="1"/>
</dbReference>
<dbReference type="Pfam" id="PF07486">
    <property type="entry name" value="Hydrolase_2"/>
    <property type="match status" value="1"/>
</dbReference>
<dbReference type="Pfam" id="PF01471">
    <property type="entry name" value="PG_binding_1"/>
    <property type="match status" value="1"/>
</dbReference>
<dbReference type="SUPFAM" id="SSF47090">
    <property type="entry name" value="PGBD-like"/>
    <property type="match status" value="1"/>
</dbReference>
<name>SLEB_HALH5</name>
<feature type="signal peptide" evidence="2">
    <location>
        <begin position="1"/>
        <end position="29"/>
    </location>
</feature>
<feature type="chain" id="PRO_0000022357" description="Spore cortex-lytic enzyme">
    <location>
        <begin position="30"/>
        <end position="330"/>
    </location>
</feature>
<feature type="region of interest" description="Disordered" evidence="3">
    <location>
        <begin position="117"/>
        <end position="195"/>
    </location>
</feature>
<feature type="compositionally biased region" description="Basic and acidic residues" evidence="3">
    <location>
        <begin position="134"/>
        <end position="173"/>
    </location>
</feature>
<feature type="compositionally biased region" description="Pro residues" evidence="3">
    <location>
        <begin position="174"/>
        <end position="187"/>
    </location>
</feature>
<proteinExistence type="inferred from homology"/>
<protein>
    <recommendedName>
        <fullName>Spore cortex-lytic enzyme</fullName>
        <shortName>SCLE</shortName>
    </recommendedName>
</protein>
<gene>
    <name type="primary">sleB</name>
    <name type="ordered locus">BH1631</name>
</gene>
<comment type="function">
    <text evidence="1">Required for spore cortex hydrolysis during germination.</text>
</comment>
<comment type="similarity">
    <text evidence="4">Belongs to the SleB family.</text>
</comment>
<comment type="sequence caution" evidence="4">
    <conflict type="erroneous initiation">
        <sequence resource="EMBL-CDS" id="BAA83916"/>
    </conflict>
</comment>
<keyword id="KW-0961">Cell wall biogenesis/degradation</keyword>
<keyword id="KW-0309">Germination</keyword>
<keyword id="KW-0378">Hydrolase</keyword>
<keyword id="KW-1185">Reference proteome</keyword>
<keyword id="KW-0732">Signal</keyword>
<keyword id="KW-0749">Sporulation</keyword>
<sequence>MSTRGWLKIPLLSLALFLSLMSMTTTAHAFSDQVIQHGATGDDVVELQARLQYIGFYNKKIDGVFGWSTYWAVRNYQYEFGMEVDGLVGPEMKAKLEKTTNFNRDFVDRALTQGRKFTHYGGVPKQIQKGPKGSADERRRGREGVRQPRADRPGRDAPAAPRDERAPRREERPAPTPEPTPAPPEEPTPYEEAPDAQDDEANIEKATNVPAGYSDNDIQLMAQAVYGEARGEPYVGQVAVAAVILNRLNSPTFPDNVSGVIFEPLAFTAVADGQIYMTPDETARRAVLDALNGQDPSGGATYYFNPDTATSGWIWSRPQIKRIGKHIFCN</sequence>
<accession>Q9KCE0</accession>
<accession>Q9RC83</accession>
<evidence type="ECO:0000250" key="1"/>
<evidence type="ECO:0000255" key="2"/>
<evidence type="ECO:0000256" key="3">
    <source>
        <dbReference type="SAM" id="MobiDB-lite"/>
    </source>
</evidence>
<evidence type="ECO:0000305" key="4"/>